<proteinExistence type="evidence at protein level"/>
<accession>P0C7Z2</accession>
<evidence type="ECO:0000269" key="1">
    <source>
    </source>
</evidence>
<evidence type="ECO:0000305" key="2"/>
<reference key="1">
    <citation type="journal article" date="2006" name="Lancet">
        <title>Complete genome sequence of USA300, an epidemic clone of community-acquired meticillin-resistant Staphylococcus aureus.</title>
        <authorList>
            <person name="Diep B.A."/>
            <person name="Gill S.R."/>
            <person name="Chang R.F."/>
            <person name="Phan T.H."/>
            <person name="Chen J.H."/>
            <person name="Davidson M.G."/>
            <person name="Lin F."/>
            <person name="Lin J."/>
            <person name="Carleton H.A."/>
            <person name="Mongodin E.F."/>
            <person name="Sensabaugh G.F."/>
            <person name="Perdreau-Remington F."/>
        </authorList>
    </citation>
    <scope>NUCLEOTIDE SEQUENCE [LARGE SCALE GENOMIC DNA]</scope>
    <source>
        <strain>USA300</strain>
    </source>
</reference>
<reference key="2">
    <citation type="journal article" date="2007" name="Nat. Med.">
        <title>Identification of novel cytolytic peptides as key virulence determinants for community-associated MRSA.</title>
        <authorList>
            <person name="Wang R."/>
            <person name="Braughton K.R."/>
            <person name="Kretschmer D."/>
            <person name="Bach T.-H.L."/>
            <person name="Queck S.Y."/>
            <person name="Li M."/>
            <person name="Kennedy A.D."/>
            <person name="Dorward D.W."/>
            <person name="Klebanoff S.J."/>
            <person name="Peschel A."/>
            <person name="DeLeo F.R."/>
            <person name="Otto M."/>
        </authorList>
    </citation>
    <scope>FUNCTION AS A VIRULENCE FACTOR</scope>
    <scope>IDENTIFICATION BY MASS SPECTROMETRY</scope>
    <scope>INDUCTION BY AGR</scope>
</reference>
<name>PSMA2_STAA3</name>
<sequence>MGIIAGIIKFIKGLIEKFTGK</sequence>
<comment type="function">
    <text evidence="1">Peptide which can recruit, activate and subsequently lyse human neutrophils, thus eliminating the main cellular defense against infection. Stimulates the secretion of the chemotactic factor interleukin-8 (IL-8). The ensuing activation process triggers an inflammatory response in the host, thus contributing greatly to virulence. Also possesses hemolytic activity, which may contribute to the development of disease.</text>
</comment>
<comment type="induction">
    <text evidence="1">Up-regulated by agr.</text>
</comment>
<comment type="miscellaneous">
    <text>Peptide production is higher in most prevalent community-associated MRSA strains than in hospital-associated MRSA strains.</text>
</comment>
<comment type="similarity">
    <text evidence="2">Belongs to the phenol-soluble modulin alpha peptides family.</text>
</comment>
<organism>
    <name type="scientific">Staphylococcus aureus (strain USA300)</name>
    <dbReference type="NCBI Taxonomy" id="367830"/>
    <lineage>
        <taxon>Bacteria</taxon>
        <taxon>Bacillati</taxon>
        <taxon>Bacillota</taxon>
        <taxon>Bacilli</taxon>
        <taxon>Bacillales</taxon>
        <taxon>Staphylococcaceae</taxon>
        <taxon>Staphylococcus</taxon>
    </lineage>
</organism>
<gene>
    <name type="primary">psmA2</name>
    <name type="ordered locus">SAUSA300_0424.3</name>
</gene>
<keyword id="KW-0204">Cytolysis</keyword>
<keyword id="KW-0843">Virulence</keyword>
<feature type="peptide" id="PRO_0000345045" description="Phenol-soluble modulin alpha 2 peptide">
    <location>
        <begin position="1"/>
        <end position="21"/>
    </location>
</feature>
<dbReference type="EMBL" id="CP000255">
    <property type="status" value="NOT_ANNOTATED_CDS"/>
    <property type="molecule type" value="Genomic_DNA"/>
</dbReference>
<dbReference type="PHI-base" id="PHI:6667"/>
<dbReference type="Proteomes" id="UP000001939">
    <property type="component" value="Chromosome"/>
</dbReference>
<dbReference type="GO" id="GO:0031640">
    <property type="term" value="P:killing of cells of another organism"/>
    <property type="evidence" value="ECO:0007669"/>
    <property type="project" value="UniProtKB-KW"/>
</dbReference>
<dbReference type="InterPro" id="IPR031429">
    <property type="entry name" value="PSM_alpha"/>
</dbReference>
<dbReference type="NCBIfam" id="NF033425">
    <property type="entry name" value="PSM_alpha_1_2"/>
    <property type="match status" value="1"/>
</dbReference>
<dbReference type="Pfam" id="PF17063">
    <property type="entry name" value="PSMalpha"/>
    <property type="match status" value="1"/>
</dbReference>
<protein>
    <recommendedName>
        <fullName>Phenol-soluble modulin alpha 2 peptide</fullName>
    </recommendedName>
</protein>